<name>DAPB_MYCSJ</name>
<comment type="function">
    <text evidence="1">Catalyzes the conversion of 4-hydroxy-tetrahydrodipicolinate (HTPA) to tetrahydrodipicolinate.</text>
</comment>
<comment type="catalytic activity">
    <reaction evidence="1">
        <text>(S)-2,3,4,5-tetrahydrodipicolinate + NAD(+) + H2O = (2S,4S)-4-hydroxy-2,3,4,5-tetrahydrodipicolinate + NADH + H(+)</text>
        <dbReference type="Rhea" id="RHEA:35323"/>
        <dbReference type="ChEBI" id="CHEBI:15377"/>
        <dbReference type="ChEBI" id="CHEBI:15378"/>
        <dbReference type="ChEBI" id="CHEBI:16845"/>
        <dbReference type="ChEBI" id="CHEBI:57540"/>
        <dbReference type="ChEBI" id="CHEBI:57945"/>
        <dbReference type="ChEBI" id="CHEBI:67139"/>
        <dbReference type="EC" id="1.17.1.8"/>
    </reaction>
</comment>
<comment type="catalytic activity">
    <reaction evidence="1">
        <text>(S)-2,3,4,5-tetrahydrodipicolinate + NADP(+) + H2O = (2S,4S)-4-hydroxy-2,3,4,5-tetrahydrodipicolinate + NADPH + H(+)</text>
        <dbReference type="Rhea" id="RHEA:35331"/>
        <dbReference type="ChEBI" id="CHEBI:15377"/>
        <dbReference type="ChEBI" id="CHEBI:15378"/>
        <dbReference type="ChEBI" id="CHEBI:16845"/>
        <dbReference type="ChEBI" id="CHEBI:57783"/>
        <dbReference type="ChEBI" id="CHEBI:58349"/>
        <dbReference type="ChEBI" id="CHEBI:67139"/>
        <dbReference type="EC" id="1.17.1.8"/>
    </reaction>
</comment>
<comment type="pathway">
    <text evidence="1">Amino-acid biosynthesis; L-lysine biosynthesis via DAP pathway; (S)-tetrahydrodipicolinate from L-aspartate: step 4/4.</text>
</comment>
<comment type="subcellular location">
    <subcellularLocation>
        <location evidence="1">Cytoplasm</location>
    </subcellularLocation>
</comment>
<comment type="similarity">
    <text evidence="1">Belongs to the DapB family.</text>
</comment>
<comment type="caution">
    <text evidence="2">Was originally thought to be a dihydrodipicolinate reductase (DHDPR), catalyzing the conversion of dihydrodipicolinate to tetrahydrodipicolinate. However, it was shown in E.coli that the substrate of the enzymatic reaction is not dihydrodipicolinate (DHDP) but in fact (2S,4S)-4-hydroxy-2,3,4,5-tetrahydrodipicolinic acid (HTPA), the product released by the DapA-catalyzed reaction.</text>
</comment>
<protein>
    <recommendedName>
        <fullName evidence="1">4-hydroxy-tetrahydrodipicolinate reductase</fullName>
        <shortName evidence="1">HTPA reductase</shortName>
        <ecNumber evidence="1">1.17.1.8</ecNumber>
    </recommendedName>
</protein>
<evidence type="ECO:0000255" key="1">
    <source>
        <dbReference type="HAMAP-Rule" id="MF_00102"/>
    </source>
</evidence>
<evidence type="ECO:0000305" key="2"/>
<keyword id="KW-0028">Amino-acid biosynthesis</keyword>
<keyword id="KW-0963">Cytoplasm</keyword>
<keyword id="KW-0220">Diaminopimelate biosynthesis</keyword>
<keyword id="KW-0457">Lysine biosynthesis</keyword>
<keyword id="KW-0520">NAD</keyword>
<keyword id="KW-0521">NADP</keyword>
<keyword id="KW-0560">Oxidoreductase</keyword>
<feature type="chain" id="PRO_1000008598" description="4-hydroxy-tetrahydrodipicolinate reductase">
    <location>
        <begin position="1"/>
        <end position="245"/>
    </location>
</feature>
<feature type="active site" description="Proton donor/acceptor" evidence="1">
    <location>
        <position position="132"/>
    </location>
</feature>
<feature type="active site" description="Proton donor" evidence="1">
    <location>
        <position position="136"/>
    </location>
</feature>
<feature type="binding site" evidence="1">
    <location>
        <begin position="7"/>
        <end position="12"/>
    </location>
    <ligand>
        <name>NAD(+)</name>
        <dbReference type="ChEBI" id="CHEBI:57540"/>
    </ligand>
</feature>
<feature type="binding site" evidence="1">
    <location>
        <begin position="75"/>
        <end position="77"/>
    </location>
    <ligand>
        <name>NAD(+)</name>
        <dbReference type="ChEBI" id="CHEBI:57540"/>
    </ligand>
</feature>
<feature type="binding site" evidence="1">
    <location>
        <begin position="102"/>
        <end position="105"/>
    </location>
    <ligand>
        <name>NAD(+)</name>
        <dbReference type="ChEBI" id="CHEBI:57540"/>
    </ligand>
</feature>
<feature type="binding site" evidence="1">
    <location>
        <position position="133"/>
    </location>
    <ligand>
        <name>(S)-2,3,4,5-tetrahydrodipicolinate</name>
        <dbReference type="ChEBI" id="CHEBI:16845"/>
    </ligand>
</feature>
<feature type="binding site" evidence="1">
    <location>
        <begin position="142"/>
        <end position="143"/>
    </location>
    <ligand>
        <name>(S)-2,3,4,5-tetrahydrodipicolinate</name>
        <dbReference type="ChEBI" id="CHEBI:16845"/>
    </ligand>
</feature>
<proteinExistence type="inferred from homology"/>
<organism>
    <name type="scientific">Mycobacterium sp. (strain JLS)</name>
    <dbReference type="NCBI Taxonomy" id="164757"/>
    <lineage>
        <taxon>Bacteria</taxon>
        <taxon>Bacillati</taxon>
        <taxon>Actinomycetota</taxon>
        <taxon>Actinomycetes</taxon>
        <taxon>Mycobacteriales</taxon>
        <taxon>Mycobacteriaceae</taxon>
        <taxon>Mycobacterium</taxon>
    </lineage>
</organism>
<dbReference type="EC" id="1.17.1.8" evidence="1"/>
<dbReference type="EMBL" id="CP000580">
    <property type="protein sequence ID" value="ABN97877.1"/>
    <property type="molecule type" value="Genomic_DNA"/>
</dbReference>
<dbReference type="SMR" id="A3PYA0"/>
<dbReference type="KEGG" id="mjl:Mjls_2090"/>
<dbReference type="HOGENOM" id="CLU_047479_0_1_11"/>
<dbReference type="BioCyc" id="MSP164757:G1G8C-2109-MONOMER"/>
<dbReference type="UniPathway" id="UPA00034">
    <property type="reaction ID" value="UER00018"/>
</dbReference>
<dbReference type="GO" id="GO:0005829">
    <property type="term" value="C:cytosol"/>
    <property type="evidence" value="ECO:0007669"/>
    <property type="project" value="TreeGrafter"/>
</dbReference>
<dbReference type="GO" id="GO:0008839">
    <property type="term" value="F:4-hydroxy-tetrahydrodipicolinate reductase"/>
    <property type="evidence" value="ECO:0007669"/>
    <property type="project" value="UniProtKB-EC"/>
</dbReference>
<dbReference type="GO" id="GO:0051287">
    <property type="term" value="F:NAD binding"/>
    <property type="evidence" value="ECO:0007669"/>
    <property type="project" value="UniProtKB-UniRule"/>
</dbReference>
<dbReference type="GO" id="GO:0050661">
    <property type="term" value="F:NADP binding"/>
    <property type="evidence" value="ECO:0007669"/>
    <property type="project" value="UniProtKB-UniRule"/>
</dbReference>
<dbReference type="GO" id="GO:0016726">
    <property type="term" value="F:oxidoreductase activity, acting on CH or CH2 groups, NAD or NADP as acceptor"/>
    <property type="evidence" value="ECO:0007669"/>
    <property type="project" value="UniProtKB-UniRule"/>
</dbReference>
<dbReference type="GO" id="GO:0019877">
    <property type="term" value="P:diaminopimelate biosynthetic process"/>
    <property type="evidence" value="ECO:0007669"/>
    <property type="project" value="UniProtKB-UniRule"/>
</dbReference>
<dbReference type="GO" id="GO:0009089">
    <property type="term" value="P:lysine biosynthetic process via diaminopimelate"/>
    <property type="evidence" value="ECO:0007669"/>
    <property type="project" value="UniProtKB-UniRule"/>
</dbReference>
<dbReference type="CDD" id="cd02274">
    <property type="entry name" value="DHDPR_N"/>
    <property type="match status" value="1"/>
</dbReference>
<dbReference type="FunFam" id="3.30.360.10:FF:000009">
    <property type="entry name" value="4-hydroxy-tetrahydrodipicolinate reductase"/>
    <property type="match status" value="1"/>
</dbReference>
<dbReference type="Gene3D" id="3.30.360.10">
    <property type="entry name" value="Dihydrodipicolinate Reductase, domain 2"/>
    <property type="match status" value="1"/>
</dbReference>
<dbReference type="Gene3D" id="3.40.50.720">
    <property type="entry name" value="NAD(P)-binding Rossmann-like Domain"/>
    <property type="match status" value="1"/>
</dbReference>
<dbReference type="HAMAP" id="MF_00102">
    <property type="entry name" value="DapB"/>
    <property type="match status" value="1"/>
</dbReference>
<dbReference type="InterPro" id="IPR022663">
    <property type="entry name" value="DapB_C"/>
</dbReference>
<dbReference type="InterPro" id="IPR000846">
    <property type="entry name" value="DapB_N"/>
</dbReference>
<dbReference type="InterPro" id="IPR022664">
    <property type="entry name" value="DapB_N_CS"/>
</dbReference>
<dbReference type="InterPro" id="IPR023940">
    <property type="entry name" value="DHDPR_bac"/>
</dbReference>
<dbReference type="InterPro" id="IPR036291">
    <property type="entry name" value="NAD(P)-bd_dom_sf"/>
</dbReference>
<dbReference type="NCBIfam" id="TIGR00036">
    <property type="entry name" value="dapB"/>
    <property type="match status" value="1"/>
</dbReference>
<dbReference type="PANTHER" id="PTHR20836:SF0">
    <property type="entry name" value="4-HYDROXY-TETRAHYDRODIPICOLINATE REDUCTASE 1, CHLOROPLASTIC-RELATED"/>
    <property type="match status" value="1"/>
</dbReference>
<dbReference type="PANTHER" id="PTHR20836">
    <property type="entry name" value="DIHYDRODIPICOLINATE REDUCTASE"/>
    <property type="match status" value="1"/>
</dbReference>
<dbReference type="Pfam" id="PF05173">
    <property type="entry name" value="DapB_C"/>
    <property type="match status" value="1"/>
</dbReference>
<dbReference type="Pfam" id="PF01113">
    <property type="entry name" value="DapB_N"/>
    <property type="match status" value="1"/>
</dbReference>
<dbReference type="PIRSF" id="PIRSF000161">
    <property type="entry name" value="DHPR"/>
    <property type="match status" value="1"/>
</dbReference>
<dbReference type="SUPFAM" id="SSF55347">
    <property type="entry name" value="Glyceraldehyde-3-phosphate dehydrogenase-like, C-terminal domain"/>
    <property type="match status" value="1"/>
</dbReference>
<dbReference type="SUPFAM" id="SSF51735">
    <property type="entry name" value="NAD(P)-binding Rossmann-fold domains"/>
    <property type="match status" value="1"/>
</dbReference>
<dbReference type="PROSITE" id="PS01298">
    <property type="entry name" value="DAPB"/>
    <property type="match status" value="1"/>
</dbReference>
<accession>A3PYA0</accession>
<reference key="1">
    <citation type="submission" date="2007-02" db="EMBL/GenBank/DDBJ databases">
        <title>Complete sequence of Mycobacterium sp. JLS.</title>
        <authorList>
            <consortium name="US DOE Joint Genome Institute"/>
            <person name="Copeland A."/>
            <person name="Lucas S."/>
            <person name="Lapidus A."/>
            <person name="Barry K."/>
            <person name="Detter J.C."/>
            <person name="Glavina del Rio T."/>
            <person name="Hammon N."/>
            <person name="Israni S."/>
            <person name="Dalin E."/>
            <person name="Tice H."/>
            <person name="Pitluck S."/>
            <person name="Chain P."/>
            <person name="Malfatti S."/>
            <person name="Shin M."/>
            <person name="Vergez L."/>
            <person name="Schmutz J."/>
            <person name="Larimer F."/>
            <person name="Land M."/>
            <person name="Hauser L."/>
            <person name="Kyrpides N."/>
            <person name="Mikhailova N."/>
            <person name="Miller C.D."/>
            <person name="Anderson A.J."/>
            <person name="Sims R.C."/>
            <person name="Richardson P."/>
        </authorList>
    </citation>
    <scope>NUCLEOTIDE SEQUENCE [LARGE SCALE GENOMIC DNA]</scope>
    <source>
        <strain>JLS</strain>
    </source>
</reference>
<sequence>MRVGVLGAKGKVGATMVQAVEAADDLTFTTGVDAGDPLSALVDTRTDVVIDFTHPSVVMDNLKFLIDNGIHAVVGTTGFTDERISQVQDWLADKPESAVLIAPNFAIGAVLSMHFAQQAARFFESVEVIELHHPHKADAPSGTAARTAKLIAAARKDMPPNPDATSTGLEGARGADVDGIPVHSIRLAGLVAHQEVLFGTQGETLTIRHDSLDRTSFVPGVLLAVRKVSERPGLSVGIEPLLDLT</sequence>
<gene>
    <name evidence="1" type="primary">dapB</name>
    <name type="ordered locus">Mjls_2090</name>
</gene>